<sequence>MHPSEMQRKAPPRRRRHRNRAPLTHKMNKMVTSEQMKLPSTKKAEPPTWAQLKKLTQLATKYLENTKVTQTPESMLLAALMIVSMVSAGVPNSSEETATIENGP</sequence>
<evidence type="ECO:0000250" key="1"/>
<evidence type="ECO:0000255" key="2"/>
<evidence type="ECO:0000256" key="3">
    <source>
        <dbReference type="SAM" id="MobiDB-lite"/>
    </source>
</evidence>
<evidence type="ECO:0000305" key="4"/>
<feature type="chain" id="PRO_0000186774" description="Endogenous retrovirus group K member 21 Rec protein">
    <location>
        <begin position="1"/>
        <end position="104"/>
    </location>
</feature>
<feature type="region of interest" description="Disordered" evidence="3">
    <location>
        <begin position="1"/>
        <end position="48"/>
    </location>
</feature>
<feature type="short sequence motif" description="Nuclear localization signal" evidence="2">
    <location>
        <begin position="13"/>
        <end position="20"/>
    </location>
</feature>
<feature type="short sequence motif" description="Nuclear export signal" evidence="2">
    <location>
        <begin position="49"/>
        <end position="58"/>
    </location>
</feature>
<feature type="compositionally biased region" description="Basic residues" evidence="3">
    <location>
        <begin position="10"/>
        <end position="20"/>
    </location>
</feature>
<feature type="sequence conflict" description="In Ref. 2; AAQ84101/AAQ84109." evidence="4" ref="2">
    <original>H</original>
    <variation>N</variation>
    <location>
        <position position="2"/>
    </location>
</feature>
<feature type="sequence conflict" description="In Ref. 2; AAQ84109." evidence="4" ref="2">
    <location>
        <begin position="44"/>
        <end position="86"/>
    </location>
</feature>
<name>REC21_HUMAN</name>
<reference key="1">
    <citation type="journal article" date="2006" name="Nature">
        <title>The finished DNA sequence of human chromosome 12.</title>
        <authorList>
            <person name="Scherer S.E."/>
            <person name="Muzny D.M."/>
            <person name="Buhay C.J."/>
            <person name="Chen R."/>
            <person name="Cree A."/>
            <person name="Ding Y."/>
            <person name="Dugan-Rocha S."/>
            <person name="Gill R."/>
            <person name="Gunaratne P."/>
            <person name="Harris R.A."/>
            <person name="Hawes A.C."/>
            <person name="Hernandez J."/>
            <person name="Hodgson A.V."/>
            <person name="Hume J."/>
            <person name="Jackson A."/>
            <person name="Khan Z.M."/>
            <person name="Kovar-Smith C."/>
            <person name="Lewis L.R."/>
            <person name="Lozado R.J."/>
            <person name="Metzker M.L."/>
            <person name="Milosavljevic A."/>
            <person name="Miner G.R."/>
            <person name="Montgomery K.T."/>
            <person name="Morgan M.B."/>
            <person name="Nazareth L.V."/>
            <person name="Scott G."/>
            <person name="Sodergren E."/>
            <person name="Song X.-Z."/>
            <person name="Steffen D."/>
            <person name="Lovering R.C."/>
            <person name="Wheeler D.A."/>
            <person name="Worley K.C."/>
            <person name="Yuan Y."/>
            <person name="Zhang Z."/>
            <person name="Adams C.Q."/>
            <person name="Ansari-Lari M.A."/>
            <person name="Ayele M."/>
            <person name="Brown M.J."/>
            <person name="Chen G."/>
            <person name="Chen Z."/>
            <person name="Clerc-Blankenburg K.P."/>
            <person name="Davis C."/>
            <person name="Delgado O."/>
            <person name="Dinh H.H."/>
            <person name="Draper H."/>
            <person name="Gonzalez-Garay M.L."/>
            <person name="Havlak P."/>
            <person name="Jackson L.R."/>
            <person name="Jacob L.S."/>
            <person name="Kelly S.H."/>
            <person name="Li L."/>
            <person name="Li Z."/>
            <person name="Liu J."/>
            <person name="Liu W."/>
            <person name="Lu J."/>
            <person name="Maheshwari M."/>
            <person name="Nguyen B.-V."/>
            <person name="Okwuonu G.O."/>
            <person name="Pasternak S."/>
            <person name="Perez L.M."/>
            <person name="Plopper F.J.H."/>
            <person name="Santibanez J."/>
            <person name="Shen H."/>
            <person name="Tabor P.E."/>
            <person name="Verduzco D."/>
            <person name="Waldron L."/>
            <person name="Wang Q."/>
            <person name="Williams G.A."/>
            <person name="Zhang J."/>
            <person name="Zhou J."/>
            <person name="Allen C.C."/>
            <person name="Amin A.G."/>
            <person name="Anyalebechi V."/>
            <person name="Bailey M."/>
            <person name="Barbaria J.A."/>
            <person name="Bimage K.E."/>
            <person name="Bryant N.P."/>
            <person name="Burch P.E."/>
            <person name="Burkett C.E."/>
            <person name="Burrell K.L."/>
            <person name="Calderon E."/>
            <person name="Cardenas V."/>
            <person name="Carter K."/>
            <person name="Casias K."/>
            <person name="Cavazos I."/>
            <person name="Cavazos S.R."/>
            <person name="Ceasar H."/>
            <person name="Chacko J."/>
            <person name="Chan S.N."/>
            <person name="Chavez D."/>
            <person name="Christopoulos C."/>
            <person name="Chu J."/>
            <person name="Cockrell R."/>
            <person name="Cox C.D."/>
            <person name="Dang M."/>
            <person name="Dathorne S.R."/>
            <person name="David R."/>
            <person name="Davis C.M."/>
            <person name="Davy-Carroll L."/>
            <person name="Deshazo D.R."/>
            <person name="Donlin J.E."/>
            <person name="D'Souza L."/>
            <person name="Eaves K.A."/>
            <person name="Egan A."/>
            <person name="Emery-Cohen A.J."/>
            <person name="Escotto M."/>
            <person name="Flagg N."/>
            <person name="Forbes L.D."/>
            <person name="Gabisi A.M."/>
            <person name="Garza M."/>
            <person name="Hamilton C."/>
            <person name="Henderson N."/>
            <person name="Hernandez O."/>
            <person name="Hines S."/>
            <person name="Hogues M.E."/>
            <person name="Huang M."/>
            <person name="Idlebird D.G."/>
            <person name="Johnson R."/>
            <person name="Jolivet A."/>
            <person name="Jones S."/>
            <person name="Kagan R."/>
            <person name="King L.M."/>
            <person name="Leal B."/>
            <person name="Lebow H."/>
            <person name="Lee S."/>
            <person name="LeVan J.M."/>
            <person name="Lewis L.C."/>
            <person name="London P."/>
            <person name="Lorensuhewa L.M."/>
            <person name="Loulseged H."/>
            <person name="Lovett D.A."/>
            <person name="Lucier A."/>
            <person name="Lucier R.L."/>
            <person name="Ma J."/>
            <person name="Madu R.C."/>
            <person name="Mapua P."/>
            <person name="Martindale A.D."/>
            <person name="Martinez E."/>
            <person name="Massey E."/>
            <person name="Mawhiney S."/>
            <person name="Meador M.G."/>
            <person name="Mendez S."/>
            <person name="Mercado C."/>
            <person name="Mercado I.C."/>
            <person name="Merritt C.E."/>
            <person name="Miner Z.L."/>
            <person name="Minja E."/>
            <person name="Mitchell T."/>
            <person name="Mohabbat F."/>
            <person name="Mohabbat K."/>
            <person name="Montgomery B."/>
            <person name="Moore N."/>
            <person name="Morris S."/>
            <person name="Munidasa M."/>
            <person name="Ngo R.N."/>
            <person name="Nguyen N.B."/>
            <person name="Nickerson E."/>
            <person name="Nwaokelemeh O.O."/>
            <person name="Nwokenkwo S."/>
            <person name="Obregon M."/>
            <person name="Oguh M."/>
            <person name="Oragunye N."/>
            <person name="Oviedo R.J."/>
            <person name="Parish B.J."/>
            <person name="Parker D.N."/>
            <person name="Parrish J."/>
            <person name="Parks K.L."/>
            <person name="Paul H.A."/>
            <person name="Payton B.A."/>
            <person name="Perez A."/>
            <person name="Perrin W."/>
            <person name="Pickens A."/>
            <person name="Primus E.L."/>
            <person name="Pu L.-L."/>
            <person name="Puazo M."/>
            <person name="Quiles M.M."/>
            <person name="Quiroz J.B."/>
            <person name="Rabata D."/>
            <person name="Reeves K."/>
            <person name="Ruiz S.J."/>
            <person name="Shao H."/>
            <person name="Sisson I."/>
            <person name="Sonaike T."/>
            <person name="Sorelle R.P."/>
            <person name="Sutton A.E."/>
            <person name="Svatek A.F."/>
            <person name="Svetz L.A."/>
            <person name="Tamerisa K.S."/>
            <person name="Taylor T.R."/>
            <person name="Teague B."/>
            <person name="Thomas N."/>
            <person name="Thorn R.D."/>
            <person name="Trejos Z.Y."/>
            <person name="Trevino B.K."/>
            <person name="Ukegbu O.N."/>
            <person name="Urban J.B."/>
            <person name="Vasquez L.I."/>
            <person name="Vera V.A."/>
            <person name="Villasana D.M."/>
            <person name="Wang L."/>
            <person name="Ward-Moore S."/>
            <person name="Warren J.T."/>
            <person name="Wei X."/>
            <person name="White F."/>
            <person name="Williamson A.L."/>
            <person name="Wleczyk R."/>
            <person name="Wooden H.S."/>
            <person name="Wooden S.H."/>
            <person name="Yen J."/>
            <person name="Yoon L."/>
            <person name="Yoon V."/>
            <person name="Zorrilla S.E."/>
            <person name="Nelson D."/>
            <person name="Kucherlapati R."/>
            <person name="Weinstock G."/>
            <person name="Gibbs R.A."/>
        </authorList>
    </citation>
    <scope>NUCLEOTIDE SEQUENCE [LARGE SCALE GENOMIC DNA]</scope>
</reference>
<reference key="2">
    <citation type="journal article" date="2004" name="Virology">
        <title>Human endogenous retrovirus HERV-K(HML-2) proviruses with Rec protein coding capacity and transcriptional activity.</title>
        <authorList>
            <person name="Mayer J."/>
            <person name="Ehlhardt S."/>
            <person name="Seifert M."/>
            <person name="Sauter M."/>
            <person name="Mueller-Lantzsch N."/>
            <person name="Mehraein Y."/>
            <person name="Zang K.-D."/>
            <person name="Meese E.U."/>
        </authorList>
    </citation>
    <scope>NUCLEOTIDE SEQUENCE [MRNA]</scope>
    <scope>CHARACTERIZATION</scope>
</reference>
<organism>
    <name type="scientific">Homo sapiens</name>
    <name type="common">Human</name>
    <dbReference type="NCBI Taxonomy" id="9606"/>
    <lineage>
        <taxon>Eukaryota</taxon>
        <taxon>Metazoa</taxon>
        <taxon>Chordata</taxon>
        <taxon>Craniata</taxon>
        <taxon>Vertebrata</taxon>
        <taxon>Euteleostomi</taxon>
        <taxon>Mammalia</taxon>
        <taxon>Eutheria</taxon>
        <taxon>Euarchontoglires</taxon>
        <taxon>Primates</taxon>
        <taxon>Haplorrhini</taxon>
        <taxon>Catarrhini</taxon>
        <taxon>Hominidae</taxon>
        <taxon>Homo</taxon>
    </lineage>
</organism>
<comment type="function">
    <text evidence="1">Retroviral replication requires the nuclear export and translation of unspliced, singly-spliced and multiply-spliced derivatives of the initial genomic transcript. Rec interacts with a highly structured RNA element (RcRE) present in the viral 3'LTR and recruits the cellular nuclear export machinery. This permits export to the cytoplasm of unspliced genomic or incompletely spliced subgenomic viral transcripts (By similarity).</text>
</comment>
<comment type="subunit">
    <text evidence="1">Forms homodimers, homotrimers, and homotetramers via a C-terminal domain. Associates with XPO1 and with ZNF145 (By similarity).</text>
</comment>
<comment type="subcellular location">
    <subcellularLocation>
        <location evidence="1">Cytoplasm</location>
    </subcellularLocation>
    <subcellularLocation>
        <location evidence="1">Nucleus</location>
        <location evidence="1">Nucleolus</location>
    </subcellularLocation>
    <text evidence="1">Shuttles between the nucleus and the cytoplasm. When in the nucleus, resides in the nucleolus (By similarity).</text>
</comment>
<comment type="miscellaneous">
    <text>Despite functional similarity, Rec shares almost no sequence homology with HIV-1 Rev and HTLV-1 Rex.</text>
</comment>
<comment type="miscellaneous">
    <text>ERVK-21 has a type 2 genome. The HERV-K(HML-2) family contains type 1 and type 2 genomes depending on the absence or presence of 292 nucleotides at the 5'-end of the env gene. Rec proteins are translated from a doubly spliced transcript expressed exclusively by HERV-K(HML-2) type 2 proviral genomes. The first exon comprises the 87 N-terminal amino acids of the HERV-K(HMLM-2) type 2 envelope protein. The second exon (18 amino acids) is positioned in the 3' part of the proviral genome.</text>
</comment>
<accession>P61571</accession>
<proteinExistence type="evidence at protein level"/>
<keyword id="KW-0963">Cytoplasm</keyword>
<keyword id="KW-0895">ERV</keyword>
<keyword id="KW-0509">mRNA transport</keyword>
<keyword id="KW-0539">Nucleus</keyword>
<keyword id="KW-1185">Reference proteome</keyword>
<keyword id="KW-0694">RNA-binding</keyword>
<keyword id="KW-0813">Transport</keyword>
<keyword id="KW-0814">Transposable element</keyword>
<protein>
    <recommendedName>
        <fullName>Endogenous retrovirus group K member 21 Rec protein</fullName>
    </recommendedName>
    <alternativeName>
        <fullName>HERV-K_12q14.1 provirus Rec protein</fullName>
    </alternativeName>
</protein>
<dbReference type="EMBL" id="AC025420">
    <property type="status" value="NOT_ANNOTATED_CDS"/>
    <property type="molecule type" value="Genomic_DNA"/>
</dbReference>
<dbReference type="EMBL" id="AY395518">
    <property type="protein sequence ID" value="AAQ84101.1"/>
    <property type="molecule type" value="mRNA"/>
</dbReference>
<dbReference type="EMBL" id="AY395526">
    <property type="protein sequence ID" value="AAQ84109.1"/>
    <property type="molecule type" value="mRNA"/>
</dbReference>
<dbReference type="SMR" id="P61571"/>
<dbReference type="BioMuta" id="HGNC:39035"/>
<dbReference type="MassIVE" id="P61571"/>
<dbReference type="PeptideAtlas" id="P61571"/>
<dbReference type="GeneCards" id="ERVK-21"/>
<dbReference type="HGNC" id="HGNC:39035">
    <property type="gene designation" value="ERVK-21"/>
</dbReference>
<dbReference type="neXtProt" id="NX_P61571"/>
<dbReference type="PhylomeDB" id="P61571"/>
<dbReference type="Pharos" id="P61571">
    <property type="development level" value="Tdark"/>
</dbReference>
<dbReference type="Proteomes" id="UP000005640">
    <property type="component" value="Unplaced"/>
</dbReference>
<dbReference type="GO" id="GO:0005737">
    <property type="term" value="C:cytoplasm"/>
    <property type="evidence" value="ECO:0007669"/>
    <property type="project" value="UniProtKB-SubCell"/>
</dbReference>
<dbReference type="GO" id="GO:0005730">
    <property type="term" value="C:nucleolus"/>
    <property type="evidence" value="ECO:0007669"/>
    <property type="project" value="UniProtKB-SubCell"/>
</dbReference>
<dbReference type="GO" id="GO:0003723">
    <property type="term" value="F:RNA binding"/>
    <property type="evidence" value="ECO:0007669"/>
    <property type="project" value="UniProtKB-KW"/>
</dbReference>
<dbReference type="GO" id="GO:0051028">
    <property type="term" value="P:mRNA transport"/>
    <property type="evidence" value="ECO:0007669"/>
    <property type="project" value="UniProtKB-KW"/>
</dbReference>
<dbReference type="Pfam" id="PF15695">
    <property type="entry name" value="HERV-K_REC"/>
    <property type="match status" value="1"/>
</dbReference>
<gene>
    <name type="primary">ERVK-21</name>
</gene>